<gene>
    <name evidence="1" type="primary">recA</name>
</gene>
<proteinExistence type="inferred from homology"/>
<dbReference type="EMBL" id="L23135">
    <property type="protein sequence ID" value="AAA67702.1"/>
    <property type="molecule type" value="Genomic_DNA"/>
</dbReference>
<dbReference type="PIR" id="A55020">
    <property type="entry name" value="A55020"/>
</dbReference>
<dbReference type="SMR" id="P33542"/>
<dbReference type="GO" id="GO:0005829">
    <property type="term" value="C:cytosol"/>
    <property type="evidence" value="ECO:0007669"/>
    <property type="project" value="TreeGrafter"/>
</dbReference>
<dbReference type="GO" id="GO:0005524">
    <property type="term" value="F:ATP binding"/>
    <property type="evidence" value="ECO:0007669"/>
    <property type="project" value="UniProtKB-UniRule"/>
</dbReference>
<dbReference type="GO" id="GO:0016887">
    <property type="term" value="F:ATP hydrolysis activity"/>
    <property type="evidence" value="ECO:0007669"/>
    <property type="project" value="InterPro"/>
</dbReference>
<dbReference type="GO" id="GO:0140664">
    <property type="term" value="F:ATP-dependent DNA damage sensor activity"/>
    <property type="evidence" value="ECO:0007669"/>
    <property type="project" value="InterPro"/>
</dbReference>
<dbReference type="GO" id="GO:0003684">
    <property type="term" value="F:damaged DNA binding"/>
    <property type="evidence" value="ECO:0007669"/>
    <property type="project" value="UniProtKB-UniRule"/>
</dbReference>
<dbReference type="GO" id="GO:0003697">
    <property type="term" value="F:single-stranded DNA binding"/>
    <property type="evidence" value="ECO:0007669"/>
    <property type="project" value="UniProtKB-UniRule"/>
</dbReference>
<dbReference type="GO" id="GO:0006310">
    <property type="term" value="P:DNA recombination"/>
    <property type="evidence" value="ECO:0007669"/>
    <property type="project" value="UniProtKB-UniRule"/>
</dbReference>
<dbReference type="GO" id="GO:0006281">
    <property type="term" value="P:DNA repair"/>
    <property type="evidence" value="ECO:0007669"/>
    <property type="project" value="UniProtKB-UniRule"/>
</dbReference>
<dbReference type="GO" id="GO:0009432">
    <property type="term" value="P:SOS response"/>
    <property type="evidence" value="ECO:0007669"/>
    <property type="project" value="UniProtKB-UniRule"/>
</dbReference>
<dbReference type="CDD" id="cd00983">
    <property type="entry name" value="RecA"/>
    <property type="match status" value="1"/>
</dbReference>
<dbReference type="FunFam" id="3.40.50.300:FF:000087">
    <property type="entry name" value="Recombinase RecA"/>
    <property type="match status" value="1"/>
</dbReference>
<dbReference type="Gene3D" id="3.40.50.300">
    <property type="entry name" value="P-loop containing nucleotide triphosphate hydrolases"/>
    <property type="match status" value="1"/>
</dbReference>
<dbReference type="HAMAP" id="MF_00268">
    <property type="entry name" value="RecA"/>
    <property type="match status" value="1"/>
</dbReference>
<dbReference type="InterPro" id="IPR003593">
    <property type="entry name" value="AAA+_ATPase"/>
</dbReference>
<dbReference type="InterPro" id="IPR013765">
    <property type="entry name" value="DNA_recomb/repair_RecA"/>
</dbReference>
<dbReference type="InterPro" id="IPR020584">
    <property type="entry name" value="DNA_recomb/repair_RecA_CS"/>
</dbReference>
<dbReference type="InterPro" id="IPR027417">
    <property type="entry name" value="P-loop_NTPase"/>
</dbReference>
<dbReference type="InterPro" id="IPR049261">
    <property type="entry name" value="RecA-like_C"/>
</dbReference>
<dbReference type="InterPro" id="IPR049428">
    <property type="entry name" value="RecA-like_N"/>
</dbReference>
<dbReference type="InterPro" id="IPR020588">
    <property type="entry name" value="RecA_ATP-bd"/>
</dbReference>
<dbReference type="InterPro" id="IPR023400">
    <property type="entry name" value="RecA_C_sf"/>
</dbReference>
<dbReference type="InterPro" id="IPR020587">
    <property type="entry name" value="RecA_monomer-monomer_interface"/>
</dbReference>
<dbReference type="NCBIfam" id="TIGR02012">
    <property type="entry name" value="tigrfam_recA"/>
    <property type="match status" value="1"/>
</dbReference>
<dbReference type="PANTHER" id="PTHR45900:SF1">
    <property type="entry name" value="MITOCHONDRIAL DNA REPAIR PROTEIN RECA HOMOLOG-RELATED"/>
    <property type="match status" value="1"/>
</dbReference>
<dbReference type="PANTHER" id="PTHR45900">
    <property type="entry name" value="RECA"/>
    <property type="match status" value="1"/>
</dbReference>
<dbReference type="Pfam" id="PF00154">
    <property type="entry name" value="RecA"/>
    <property type="match status" value="1"/>
</dbReference>
<dbReference type="Pfam" id="PF21096">
    <property type="entry name" value="RecA_C"/>
    <property type="match status" value="1"/>
</dbReference>
<dbReference type="PRINTS" id="PR00142">
    <property type="entry name" value="RECA"/>
</dbReference>
<dbReference type="SMART" id="SM00382">
    <property type="entry name" value="AAA"/>
    <property type="match status" value="1"/>
</dbReference>
<dbReference type="SUPFAM" id="SSF52540">
    <property type="entry name" value="P-loop containing nucleoside triphosphate hydrolases"/>
    <property type="match status" value="1"/>
</dbReference>
<dbReference type="SUPFAM" id="SSF54752">
    <property type="entry name" value="RecA protein, C-terminal domain"/>
    <property type="match status" value="1"/>
</dbReference>
<dbReference type="PROSITE" id="PS00321">
    <property type="entry name" value="RECA_1"/>
    <property type="match status" value="1"/>
</dbReference>
<dbReference type="PROSITE" id="PS50162">
    <property type="entry name" value="RECA_2"/>
    <property type="match status" value="1"/>
</dbReference>
<dbReference type="PROSITE" id="PS50163">
    <property type="entry name" value="RECA_3"/>
    <property type="match status" value="1"/>
</dbReference>
<keyword id="KW-0067">ATP-binding</keyword>
<keyword id="KW-0963">Cytoplasm</keyword>
<keyword id="KW-0227">DNA damage</keyword>
<keyword id="KW-0233">DNA recombination</keyword>
<keyword id="KW-0234">DNA repair</keyword>
<keyword id="KW-0238">DNA-binding</keyword>
<keyword id="KW-0547">Nucleotide-binding</keyword>
<keyword id="KW-0742">SOS response</keyword>
<comment type="function">
    <text>Can catalyze the hydrolysis of ATP in the presence of single-stranded DNA, the ATP-dependent uptake of single-stranded DNA by duplex DNA, and the ATP-dependent hybridization of homologous single-stranded DNAs. It interacts with LexA causing its activation and leading to its autocatalytic cleavage.</text>
</comment>
<comment type="subcellular location">
    <subcellularLocation>
        <location evidence="1">Cytoplasm</location>
    </subcellularLocation>
</comment>
<comment type="similarity">
    <text evidence="1">Belongs to the RecA family.</text>
</comment>
<evidence type="ECO:0000255" key="1">
    <source>
        <dbReference type="HAMAP-Rule" id="MF_00268"/>
    </source>
</evidence>
<reference key="1">
    <citation type="journal article" date="1994" name="J. Biol. Chem.">
        <title>Cloning, sequencing, and expression of RecA proteins from three distantly related thermophilic eubacteria.</title>
        <authorList>
            <person name="Wetmur J.G."/>
            <person name="Wong D.M."/>
            <person name="Ortiz B."/>
            <person name="Tong J."/>
            <person name="Reichert F."/>
            <person name="Gelfand D.H."/>
        </authorList>
    </citation>
    <scope>NUCLEOTIDE SEQUENCE [GENOMIC DNA]</scope>
    <source>
        <strain>DSM 6858 / JCM 9492 / Kol5A</strain>
    </source>
</reference>
<name>RECA_AQUPY</name>
<accession>P33542</accession>
<organism>
    <name type="scientific">Aquifex pyrophilus</name>
    <dbReference type="NCBI Taxonomy" id="2714"/>
    <lineage>
        <taxon>Bacteria</taxon>
        <taxon>Pseudomonadati</taxon>
        <taxon>Aquificota</taxon>
        <taxon>Aquificia</taxon>
        <taxon>Aquificales</taxon>
        <taxon>Aquificaceae</taxon>
        <taxon>Aquifex</taxon>
    </lineage>
</organism>
<protein>
    <recommendedName>
        <fullName evidence="1">Protein RecA</fullName>
    </recommendedName>
    <alternativeName>
        <fullName evidence="1">Recombinase A</fullName>
    </alternativeName>
</protein>
<feature type="chain" id="PRO_0000122643" description="Protein RecA">
    <location>
        <begin position="1"/>
        <end position="348"/>
    </location>
</feature>
<feature type="binding site" evidence="1">
    <location>
        <begin position="71"/>
        <end position="78"/>
    </location>
    <ligand>
        <name>ATP</name>
        <dbReference type="ChEBI" id="CHEBI:30616"/>
    </ligand>
</feature>
<sequence>MARVSENLSEKMKALEVALSSIEKRFGKGAVMPLKAVETVEVETIPTGSISLDIATGVGGIPKGRITEIFGVESSGKTTLALHVIAEAQKRGGVAVFIDAEHALDPKYAKKLGVDVDNLYISQPDYGEQALEIAESLINSGAVDVIVVDSVAALVPKDELEGEMGEAQVGKQARLMSQALRKLKGAVHRSNTALIFINQIREKIGVMFGNPETTPGGRALKFFSDMRLEVRRLGDVKEGGEKKGYRVKVRVVKNKLAPPFQEAEFDVIYGEGICRICDIIDTAANLGVITKSGSWYSYGEKRLGQGREQAKKYLLEHPEMLEEIERKVREVSGLVRPDTENSVGEKSE</sequence>